<keyword id="KW-0272">Extracellular matrix</keyword>
<keyword id="KW-0325">Glycoprotein</keyword>
<keyword id="KW-0433">Leucine-rich repeat</keyword>
<keyword id="KW-1185">Reference proteome</keyword>
<keyword id="KW-0677">Repeat</keyword>
<keyword id="KW-0964">Secreted</keyword>
<keyword id="KW-0732">Signal</keyword>
<gene>
    <name type="primary">Ecm2</name>
</gene>
<evidence type="ECO:0000255" key="1"/>
<evidence type="ECO:0000255" key="2">
    <source>
        <dbReference type="PROSITE-ProRule" id="PRU00220"/>
    </source>
</evidence>
<evidence type="ECO:0000256" key="3">
    <source>
        <dbReference type="SAM" id="MobiDB-lite"/>
    </source>
</evidence>
<evidence type="ECO:0000269" key="4">
    <source>
    </source>
</evidence>
<evidence type="ECO:0000269" key="5">
    <source>
    </source>
</evidence>
<evidence type="ECO:0000305" key="6"/>
<accession>Q5FW85</accession>
<comment type="function">
    <text evidence="5">Promotes matrix assembly and cell adhesiveness.</text>
</comment>
<comment type="subunit">
    <text evidence="4 5">Interacts with numerous extracellular matrix proteins (PubMed:18757743). Interacts with isoform 1 of MSL1 (PubMed:17335777). Interacts with isoform 3 of RASSF1 (PubMed:17335777).</text>
</comment>
<comment type="subcellular location">
    <subcellularLocation>
        <location evidence="5">Secreted</location>
        <location evidence="5">Extracellular space</location>
        <location evidence="5">Extracellular matrix</location>
    </subcellularLocation>
</comment>
<comment type="developmental stage">
    <text evidence="5">At 16.5 dpc, present in periosteum of ribs. At P0, present in tendons connecting the scapula and humerus to muscles (at protein level).</text>
</comment>
<comment type="similarity">
    <text evidence="6">Belongs to the small leucine-rich proteoglycan (SLRP) family. SLRP class I subfamily.</text>
</comment>
<organism>
    <name type="scientific">Mus musculus</name>
    <name type="common">Mouse</name>
    <dbReference type="NCBI Taxonomy" id="10090"/>
    <lineage>
        <taxon>Eukaryota</taxon>
        <taxon>Metazoa</taxon>
        <taxon>Chordata</taxon>
        <taxon>Craniata</taxon>
        <taxon>Vertebrata</taxon>
        <taxon>Euteleostomi</taxon>
        <taxon>Mammalia</taxon>
        <taxon>Eutheria</taxon>
        <taxon>Euarchontoglires</taxon>
        <taxon>Glires</taxon>
        <taxon>Rodentia</taxon>
        <taxon>Myomorpha</taxon>
        <taxon>Muroidea</taxon>
        <taxon>Muridae</taxon>
        <taxon>Murinae</taxon>
        <taxon>Mus</taxon>
        <taxon>Mus</taxon>
    </lineage>
</organism>
<feature type="signal peptide" evidence="1">
    <location>
        <begin position="1"/>
        <end position="19"/>
    </location>
</feature>
<feature type="chain" id="PRO_0000287728" description="Extracellular matrix protein 2">
    <location>
        <begin position="20"/>
        <end position="670"/>
    </location>
</feature>
<feature type="domain" description="VWFC" evidence="2">
    <location>
        <begin position="96"/>
        <end position="153"/>
    </location>
</feature>
<feature type="domain" description="LRRNT">
    <location>
        <begin position="278"/>
        <end position="315"/>
    </location>
</feature>
<feature type="repeat" description="LRR 1">
    <location>
        <begin position="339"/>
        <end position="359"/>
    </location>
</feature>
<feature type="repeat" description="LRR 2">
    <location>
        <begin position="365"/>
        <end position="386"/>
    </location>
</feature>
<feature type="repeat" description="LRR 3">
    <location>
        <begin position="387"/>
        <end position="407"/>
    </location>
</feature>
<feature type="repeat" description="LRR 4">
    <location>
        <begin position="410"/>
        <end position="430"/>
    </location>
</feature>
<feature type="repeat" description="LRR 5">
    <location>
        <begin position="436"/>
        <end position="456"/>
    </location>
</feature>
<feature type="repeat" description="LRR 6">
    <location>
        <begin position="457"/>
        <end position="478"/>
    </location>
</feature>
<feature type="repeat" description="LRR 7">
    <location>
        <begin position="481"/>
        <end position="501"/>
    </location>
</feature>
<feature type="repeat" description="LRR 8">
    <location>
        <begin position="507"/>
        <end position="528"/>
    </location>
</feature>
<feature type="repeat" description="LRR 9">
    <location>
        <begin position="529"/>
        <end position="549"/>
    </location>
</feature>
<feature type="repeat" description="LRR 10">
    <location>
        <begin position="553"/>
        <end position="573"/>
    </location>
</feature>
<feature type="repeat" description="LRR 11">
    <location>
        <begin position="580"/>
        <end position="601"/>
    </location>
</feature>
<feature type="repeat" description="LRR 12">
    <location>
        <begin position="603"/>
        <end position="624"/>
    </location>
</feature>
<feature type="repeat" description="LRR 13">
    <location>
        <begin position="632"/>
        <end position="655"/>
    </location>
</feature>
<feature type="region of interest" description="Disordered" evidence="3">
    <location>
        <begin position="185"/>
        <end position="270"/>
    </location>
</feature>
<feature type="short sequence motif" description="Cell attachment site" evidence="1">
    <location>
        <begin position="266"/>
        <end position="268"/>
    </location>
</feature>
<feature type="compositionally biased region" description="Basic and acidic residues" evidence="3">
    <location>
        <begin position="192"/>
        <end position="227"/>
    </location>
</feature>
<feature type="compositionally biased region" description="Acidic residues" evidence="3">
    <location>
        <begin position="241"/>
        <end position="263"/>
    </location>
</feature>
<feature type="glycosylation site" description="N-linked (GlcNAc...) asparagine" evidence="1">
    <location>
        <position position="349"/>
    </location>
</feature>
<feature type="glycosylation site" description="N-linked (GlcNAc...) asparagine" evidence="1">
    <location>
        <position position="420"/>
    </location>
</feature>
<feature type="glycosylation site" description="N-linked (GlcNAc...) asparagine" evidence="1">
    <location>
        <position position="477"/>
    </location>
</feature>
<proteinExistence type="evidence at protein level"/>
<protein>
    <recommendedName>
        <fullName>Extracellular matrix protein 2</fullName>
    </recommendedName>
    <alternativeName>
        <fullName>Tenonectin</fullName>
    </alternativeName>
</protein>
<sequence>MKLAVLFCFILLIVLQTDCERGTRRQRRRMHQRRLRKSSSFHLRANRQLEVQQTTAAPDARLPTANSDYSVEENIESLLSNLGVESSYSVLPGKKGYCFVKGMIMYNKAVWSPEPCTTCLCSNGRVLCDETECHPKACPYTIKPEGECCPICSDAEQESINKLHKQVPPPQMEMDQVAIKEALQSEEDEEIAEGHKEHKKETSVPTKIHGDGERTERKLRPEKEGRSAHQPLYHGRREEEESKEETEREGEEEEEEEEEEEEDAIRGDVFRMSSRVIPGTPRGRPRLPRSCSLSYRTISCVHADFTEIPPITAPEVTNLELVGNSIISIPDEAFNGLPNLERLDLSRNNITSSGIGPKAFKSLKKLMRLNMDGNNLVHIPSDLPSTLEELKINDNNLQAIDEKSLSDLNQLVTLELEGNNLSEINVDPLAFQSLESLSYLRLGRNKFRIIPQGLPASTEELYLENNQIEEITEICFNHTRKITMIILRYNKIEESRIAPLAWINQENLESIDLSYNKLYHVPSYLPKSLLHLVLIGNQIDRIPGYVFGHMQPGLEYLYLSFNRLSDDGVDLVSFYGAYHSLRELFLDHNDFKSIPPGIQDMKALHFLRLNNNKIRNIHPEQICNAEEDEDSALEHLHLENNYIRTREISSYAFSCIRLYSSIVLKPQHIK</sequence>
<reference key="1">
    <citation type="journal article" date="2005" name="Science">
        <title>The transcriptional landscape of the mammalian genome.</title>
        <authorList>
            <person name="Carninci P."/>
            <person name="Kasukawa T."/>
            <person name="Katayama S."/>
            <person name="Gough J."/>
            <person name="Frith M.C."/>
            <person name="Maeda N."/>
            <person name="Oyama R."/>
            <person name="Ravasi T."/>
            <person name="Lenhard B."/>
            <person name="Wells C."/>
            <person name="Kodzius R."/>
            <person name="Shimokawa K."/>
            <person name="Bajic V.B."/>
            <person name="Brenner S.E."/>
            <person name="Batalov S."/>
            <person name="Forrest A.R."/>
            <person name="Zavolan M."/>
            <person name="Davis M.J."/>
            <person name="Wilming L.G."/>
            <person name="Aidinis V."/>
            <person name="Allen J.E."/>
            <person name="Ambesi-Impiombato A."/>
            <person name="Apweiler R."/>
            <person name="Aturaliya R.N."/>
            <person name="Bailey T.L."/>
            <person name="Bansal M."/>
            <person name="Baxter L."/>
            <person name="Beisel K.W."/>
            <person name="Bersano T."/>
            <person name="Bono H."/>
            <person name="Chalk A.M."/>
            <person name="Chiu K.P."/>
            <person name="Choudhary V."/>
            <person name="Christoffels A."/>
            <person name="Clutterbuck D.R."/>
            <person name="Crowe M.L."/>
            <person name="Dalla E."/>
            <person name="Dalrymple B.P."/>
            <person name="de Bono B."/>
            <person name="Della Gatta G."/>
            <person name="di Bernardo D."/>
            <person name="Down T."/>
            <person name="Engstrom P."/>
            <person name="Fagiolini M."/>
            <person name="Faulkner G."/>
            <person name="Fletcher C.F."/>
            <person name="Fukushima T."/>
            <person name="Furuno M."/>
            <person name="Futaki S."/>
            <person name="Gariboldi M."/>
            <person name="Georgii-Hemming P."/>
            <person name="Gingeras T.R."/>
            <person name="Gojobori T."/>
            <person name="Green R.E."/>
            <person name="Gustincich S."/>
            <person name="Harbers M."/>
            <person name="Hayashi Y."/>
            <person name="Hensch T.K."/>
            <person name="Hirokawa N."/>
            <person name="Hill D."/>
            <person name="Huminiecki L."/>
            <person name="Iacono M."/>
            <person name="Ikeo K."/>
            <person name="Iwama A."/>
            <person name="Ishikawa T."/>
            <person name="Jakt M."/>
            <person name="Kanapin A."/>
            <person name="Katoh M."/>
            <person name="Kawasawa Y."/>
            <person name="Kelso J."/>
            <person name="Kitamura H."/>
            <person name="Kitano H."/>
            <person name="Kollias G."/>
            <person name="Krishnan S.P."/>
            <person name="Kruger A."/>
            <person name="Kummerfeld S.K."/>
            <person name="Kurochkin I.V."/>
            <person name="Lareau L.F."/>
            <person name="Lazarevic D."/>
            <person name="Lipovich L."/>
            <person name="Liu J."/>
            <person name="Liuni S."/>
            <person name="McWilliam S."/>
            <person name="Madan Babu M."/>
            <person name="Madera M."/>
            <person name="Marchionni L."/>
            <person name="Matsuda H."/>
            <person name="Matsuzawa S."/>
            <person name="Miki H."/>
            <person name="Mignone F."/>
            <person name="Miyake S."/>
            <person name="Morris K."/>
            <person name="Mottagui-Tabar S."/>
            <person name="Mulder N."/>
            <person name="Nakano N."/>
            <person name="Nakauchi H."/>
            <person name="Ng P."/>
            <person name="Nilsson R."/>
            <person name="Nishiguchi S."/>
            <person name="Nishikawa S."/>
            <person name="Nori F."/>
            <person name="Ohara O."/>
            <person name="Okazaki Y."/>
            <person name="Orlando V."/>
            <person name="Pang K.C."/>
            <person name="Pavan W.J."/>
            <person name="Pavesi G."/>
            <person name="Pesole G."/>
            <person name="Petrovsky N."/>
            <person name="Piazza S."/>
            <person name="Reed J."/>
            <person name="Reid J.F."/>
            <person name="Ring B.Z."/>
            <person name="Ringwald M."/>
            <person name="Rost B."/>
            <person name="Ruan Y."/>
            <person name="Salzberg S.L."/>
            <person name="Sandelin A."/>
            <person name="Schneider C."/>
            <person name="Schoenbach C."/>
            <person name="Sekiguchi K."/>
            <person name="Semple C.A."/>
            <person name="Seno S."/>
            <person name="Sessa L."/>
            <person name="Sheng Y."/>
            <person name="Shibata Y."/>
            <person name="Shimada H."/>
            <person name="Shimada K."/>
            <person name="Silva D."/>
            <person name="Sinclair B."/>
            <person name="Sperling S."/>
            <person name="Stupka E."/>
            <person name="Sugiura K."/>
            <person name="Sultana R."/>
            <person name="Takenaka Y."/>
            <person name="Taki K."/>
            <person name="Tammoja K."/>
            <person name="Tan S.L."/>
            <person name="Tang S."/>
            <person name="Taylor M.S."/>
            <person name="Tegner J."/>
            <person name="Teichmann S.A."/>
            <person name="Ueda H.R."/>
            <person name="van Nimwegen E."/>
            <person name="Verardo R."/>
            <person name="Wei C.L."/>
            <person name="Yagi K."/>
            <person name="Yamanishi H."/>
            <person name="Zabarovsky E."/>
            <person name="Zhu S."/>
            <person name="Zimmer A."/>
            <person name="Hide W."/>
            <person name="Bult C."/>
            <person name="Grimmond S.M."/>
            <person name="Teasdale R.D."/>
            <person name="Liu E.T."/>
            <person name="Brusic V."/>
            <person name="Quackenbush J."/>
            <person name="Wahlestedt C."/>
            <person name="Mattick J.S."/>
            <person name="Hume D.A."/>
            <person name="Kai C."/>
            <person name="Sasaki D."/>
            <person name="Tomaru Y."/>
            <person name="Fukuda S."/>
            <person name="Kanamori-Katayama M."/>
            <person name="Suzuki M."/>
            <person name="Aoki J."/>
            <person name="Arakawa T."/>
            <person name="Iida J."/>
            <person name="Imamura K."/>
            <person name="Itoh M."/>
            <person name="Kato T."/>
            <person name="Kawaji H."/>
            <person name="Kawagashira N."/>
            <person name="Kawashima T."/>
            <person name="Kojima M."/>
            <person name="Kondo S."/>
            <person name="Konno H."/>
            <person name="Nakano K."/>
            <person name="Ninomiya N."/>
            <person name="Nishio T."/>
            <person name="Okada M."/>
            <person name="Plessy C."/>
            <person name="Shibata K."/>
            <person name="Shiraki T."/>
            <person name="Suzuki S."/>
            <person name="Tagami M."/>
            <person name="Waki K."/>
            <person name="Watahiki A."/>
            <person name="Okamura-Oho Y."/>
            <person name="Suzuki H."/>
            <person name="Kawai J."/>
            <person name="Hayashizaki Y."/>
        </authorList>
    </citation>
    <scope>NUCLEOTIDE SEQUENCE [LARGE SCALE MRNA]</scope>
    <source>
        <strain>C57BL/6J</strain>
        <tissue>Hypothalamus</tissue>
        <tissue>Medulla oblongata</tissue>
    </source>
</reference>
<reference key="2">
    <citation type="journal article" date="2004" name="Genome Res.">
        <title>The status, quality, and expansion of the NIH full-length cDNA project: the Mammalian Gene Collection (MGC).</title>
        <authorList>
            <consortium name="The MGC Project Team"/>
        </authorList>
    </citation>
    <scope>NUCLEOTIDE SEQUENCE [LARGE SCALE MRNA]</scope>
    <source>
        <strain>C57BL/6J</strain>
        <tissue>Brain</tissue>
    </source>
</reference>
<reference key="3">
    <citation type="journal article" date="2007" name="Biochem. Biophys. Res. Commun.">
        <title>Characterization of hampin/MSL1 as a node in the nuclear interactome.</title>
        <authorList>
            <person name="Dmitriev R.I."/>
            <person name="Korneenko T.V."/>
            <person name="Bessonov A.A."/>
            <person name="Shakhparonov M.I."/>
            <person name="Modyanov N.N."/>
            <person name="Pestov N.B."/>
        </authorList>
    </citation>
    <scope>INTERACTION WITH MSL1 AND RASSF1</scope>
</reference>
<reference key="4">
    <citation type="journal article" date="2008" name="Proc. Natl. Acad. Sci. U.S.A.">
        <title>Transcriptome-based systematic identification of extracellular matrix proteins.</title>
        <authorList>
            <person name="Manabe R."/>
            <person name="Tsutsui K."/>
            <person name="Yamada T."/>
            <person name="Kimura M."/>
            <person name="Nakano I."/>
            <person name="Shimono C."/>
            <person name="Sanzen N."/>
            <person name="Furutani Y."/>
            <person name="Fukuda T."/>
            <person name="Oguri Y."/>
            <person name="Shimamoto K."/>
            <person name="Kiyozumi D."/>
            <person name="Sato Y."/>
            <person name="Sado Y."/>
            <person name="Senoo H."/>
            <person name="Yamashina S."/>
            <person name="Fukuda S."/>
            <person name="Kawai J."/>
            <person name="Sugiura N."/>
            <person name="Kimata K."/>
            <person name="Hayashizaki Y."/>
            <person name="Sekiguchi K."/>
        </authorList>
    </citation>
    <scope>FUNCTION</scope>
    <scope>SUBUNIT</scope>
    <scope>SUBCELLULAR LOCATION</scope>
    <scope>DEVELOPMENTAL STAGE</scope>
</reference>
<name>ECM2_MOUSE</name>
<dbReference type="EMBL" id="AK038812">
    <property type="protein sequence ID" value="BAE20541.1"/>
    <property type="molecule type" value="mRNA"/>
</dbReference>
<dbReference type="EMBL" id="AK040995">
    <property type="protein sequence ID" value="BAE20587.1"/>
    <property type="molecule type" value="mRNA"/>
</dbReference>
<dbReference type="EMBL" id="AK134746">
    <property type="protein sequence ID" value="BAE22265.1"/>
    <property type="molecule type" value="mRNA"/>
</dbReference>
<dbReference type="EMBL" id="BC065151">
    <property type="protein sequence ID" value="AAH65151.1"/>
    <property type="molecule type" value="mRNA"/>
</dbReference>
<dbReference type="EMBL" id="BC089559">
    <property type="protein sequence ID" value="AAH89559.1"/>
    <property type="molecule type" value="mRNA"/>
</dbReference>
<dbReference type="CCDS" id="CCDS26502.1"/>
<dbReference type="RefSeq" id="NP_001012324.1">
    <property type="nucleotide sequence ID" value="NM_001012324.4"/>
</dbReference>
<dbReference type="SMR" id="Q5FW85"/>
<dbReference type="FunCoup" id="Q5FW85">
    <property type="interactions" value="49"/>
</dbReference>
<dbReference type="STRING" id="10090.ENSMUSP00000060402"/>
<dbReference type="GlyCosmos" id="Q5FW85">
    <property type="glycosylation" value="3 sites, No reported glycans"/>
</dbReference>
<dbReference type="GlyGen" id="Q5FW85">
    <property type="glycosylation" value="3 sites, 1 N-linked glycan (1 site)"/>
</dbReference>
<dbReference type="iPTMnet" id="Q5FW85"/>
<dbReference type="PhosphoSitePlus" id="Q5FW85"/>
<dbReference type="jPOST" id="Q5FW85"/>
<dbReference type="PaxDb" id="10090-ENSMUSP00000060402"/>
<dbReference type="ProteomicsDB" id="277628"/>
<dbReference type="Antibodypedia" id="43750">
    <property type="antibodies" value="32 antibodies from 14 providers"/>
</dbReference>
<dbReference type="Ensembl" id="ENSMUST00000051504.8">
    <property type="protein sequence ID" value="ENSMUSP00000060402.8"/>
    <property type="gene ID" value="ENSMUSG00000043631.9"/>
</dbReference>
<dbReference type="GeneID" id="407800"/>
<dbReference type="KEGG" id="mmu:407800"/>
<dbReference type="UCSC" id="uc007qjl.1">
    <property type="organism name" value="mouse"/>
</dbReference>
<dbReference type="AGR" id="MGI:3039578"/>
<dbReference type="CTD" id="1842"/>
<dbReference type="MGI" id="MGI:3039578">
    <property type="gene designation" value="Ecm2"/>
</dbReference>
<dbReference type="VEuPathDB" id="HostDB:ENSMUSG00000043631"/>
<dbReference type="eggNOG" id="KOG0619">
    <property type="taxonomic scope" value="Eukaryota"/>
</dbReference>
<dbReference type="GeneTree" id="ENSGT00940000159941"/>
<dbReference type="HOGENOM" id="CLU_000288_186_2_1"/>
<dbReference type="InParanoid" id="Q5FW85"/>
<dbReference type="OMA" id="MTMYNRA"/>
<dbReference type="OrthoDB" id="676979at2759"/>
<dbReference type="PhylomeDB" id="Q5FW85"/>
<dbReference type="TreeFam" id="TF330031"/>
<dbReference type="BioGRID-ORCS" id="407800">
    <property type="hits" value="6 hits in 76 CRISPR screens"/>
</dbReference>
<dbReference type="ChiTaRS" id="Ecm2">
    <property type="organism name" value="mouse"/>
</dbReference>
<dbReference type="PRO" id="PR:Q5FW85"/>
<dbReference type="Proteomes" id="UP000000589">
    <property type="component" value="Chromosome 13"/>
</dbReference>
<dbReference type="RNAct" id="Q5FW85">
    <property type="molecule type" value="protein"/>
</dbReference>
<dbReference type="Bgee" id="ENSMUSG00000043631">
    <property type="expression patterns" value="Expressed in esophagus and 97 other cell types or tissues"/>
</dbReference>
<dbReference type="GO" id="GO:0031012">
    <property type="term" value="C:extracellular matrix"/>
    <property type="evidence" value="ECO:0000314"/>
    <property type="project" value="MGI"/>
</dbReference>
<dbReference type="GO" id="GO:0005576">
    <property type="term" value="C:extracellular region"/>
    <property type="evidence" value="ECO:0007669"/>
    <property type="project" value="UniProtKB-KW"/>
</dbReference>
<dbReference type="GO" id="GO:0005614">
    <property type="term" value="C:interstitial matrix"/>
    <property type="evidence" value="ECO:0000314"/>
    <property type="project" value="MGI"/>
</dbReference>
<dbReference type="GO" id="GO:0005518">
    <property type="term" value="F:collagen binding"/>
    <property type="evidence" value="ECO:0000314"/>
    <property type="project" value="MGI"/>
</dbReference>
<dbReference type="GO" id="GO:0070052">
    <property type="term" value="F:collagen V binding"/>
    <property type="evidence" value="ECO:0000314"/>
    <property type="project" value="MGI"/>
</dbReference>
<dbReference type="GO" id="GO:0008201">
    <property type="term" value="F:heparin binding"/>
    <property type="evidence" value="ECO:0000314"/>
    <property type="project" value="MGI"/>
</dbReference>
<dbReference type="GO" id="GO:0030198">
    <property type="term" value="P:extracellular matrix organization"/>
    <property type="evidence" value="ECO:0000314"/>
    <property type="project" value="MGI"/>
</dbReference>
<dbReference type="GO" id="GO:0010811">
    <property type="term" value="P:positive regulation of cell-substrate adhesion"/>
    <property type="evidence" value="ECO:0000314"/>
    <property type="project" value="MGI"/>
</dbReference>
<dbReference type="FunFam" id="3.80.10.10:FF:000130">
    <property type="entry name" value="extracellular matrix protein 2 isoform X1"/>
    <property type="match status" value="1"/>
</dbReference>
<dbReference type="FunFam" id="3.80.10.10:FF:000284">
    <property type="entry name" value="extracellular matrix protein 2 isoform X1"/>
    <property type="match status" value="1"/>
</dbReference>
<dbReference type="FunFam" id="3.80.10.10:FF:000332">
    <property type="entry name" value="extracellular matrix protein 2 isoform X1"/>
    <property type="match status" value="1"/>
</dbReference>
<dbReference type="Gene3D" id="6.20.200.20">
    <property type="match status" value="1"/>
</dbReference>
<dbReference type="Gene3D" id="3.80.10.10">
    <property type="entry name" value="Ribonuclease Inhibitor"/>
    <property type="match status" value="2"/>
</dbReference>
<dbReference type="InterPro" id="IPR043184">
    <property type="entry name" value="ECM2"/>
</dbReference>
<dbReference type="InterPro" id="IPR001611">
    <property type="entry name" value="Leu-rich_rpt"/>
</dbReference>
<dbReference type="InterPro" id="IPR003591">
    <property type="entry name" value="Leu-rich_rpt_typical-subtyp"/>
</dbReference>
<dbReference type="InterPro" id="IPR032675">
    <property type="entry name" value="LRR_dom_sf"/>
</dbReference>
<dbReference type="InterPro" id="IPR001007">
    <property type="entry name" value="VWF_dom"/>
</dbReference>
<dbReference type="PANTHER" id="PTHR46544:SF1">
    <property type="entry name" value="EXTRACELLULAR MATRIX PROTEIN 2"/>
    <property type="match status" value="1"/>
</dbReference>
<dbReference type="PANTHER" id="PTHR46544">
    <property type="entry name" value="EXTRACELLULAR MATRIX PROTEIN 2-RELATED"/>
    <property type="match status" value="1"/>
</dbReference>
<dbReference type="Pfam" id="PF13855">
    <property type="entry name" value="LRR_8"/>
    <property type="match status" value="2"/>
</dbReference>
<dbReference type="Pfam" id="PF00093">
    <property type="entry name" value="VWC"/>
    <property type="match status" value="1"/>
</dbReference>
<dbReference type="SMART" id="SM00369">
    <property type="entry name" value="LRR_TYP"/>
    <property type="match status" value="11"/>
</dbReference>
<dbReference type="SMART" id="SM00214">
    <property type="entry name" value="VWC"/>
    <property type="match status" value="1"/>
</dbReference>
<dbReference type="SUPFAM" id="SSF57603">
    <property type="entry name" value="FnI-like domain"/>
    <property type="match status" value="1"/>
</dbReference>
<dbReference type="SUPFAM" id="SSF52058">
    <property type="entry name" value="L domain-like"/>
    <property type="match status" value="1"/>
</dbReference>
<dbReference type="PROSITE" id="PS51450">
    <property type="entry name" value="LRR"/>
    <property type="match status" value="13"/>
</dbReference>
<dbReference type="PROSITE" id="PS01208">
    <property type="entry name" value="VWFC_1"/>
    <property type="match status" value="1"/>
</dbReference>
<dbReference type="PROSITE" id="PS50184">
    <property type="entry name" value="VWFC_2"/>
    <property type="match status" value="1"/>
</dbReference>